<proteinExistence type="inferred from homology"/>
<accession>Q32JV3</accession>
<gene>
    <name evidence="1" type="primary">clcA</name>
    <name evidence="1" type="synonym">eriC</name>
    <name type="ordered locus">SDY_0171</name>
</gene>
<reference key="1">
    <citation type="journal article" date="2005" name="Nucleic Acids Res.">
        <title>Genome dynamics and diversity of Shigella species, the etiologic agents of bacillary dysentery.</title>
        <authorList>
            <person name="Yang F."/>
            <person name="Yang J."/>
            <person name="Zhang X."/>
            <person name="Chen L."/>
            <person name="Jiang Y."/>
            <person name="Yan Y."/>
            <person name="Tang X."/>
            <person name="Wang J."/>
            <person name="Xiong Z."/>
            <person name="Dong J."/>
            <person name="Xue Y."/>
            <person name="Zhu Y."/>
            <person name="Xu X."/>
            <person name="Sun L."/>
            <person name="Chen S."/>
            <person name="Nie H."/>
            <person name="Peng J."/>
            <person name="Xu J."/>
            <person name="Wang Y."/>
            <person name="Yuan Z."/>
            <person name="Wen Y."/>
            <person name="Yao Z."/>
            <person name="Shen Y."/>
            <person name="Qiang B."/>
            <person name="Hou Y."/>
            <person name="Yu J."/>
            <person name="Jin Q."/>
        </authorList>
    </citation>
    <scope>NUCLEOTIDE SEQUENCE [LARGE SCALE GENOMIC DNA]</scope>
    <source>
        <strain>Sd197</strain>
    </source>
</reference>
<dbReference type="EMBL" id="CP000034">
    <property type="protein sequence ID" value="ABB60404.1"/>
    <property type="molecule type" value="Genomic_DNA"/>
</dbReference>
<dbReference type="RefSeq" id="WP_000845408.1">
    <property type="nucleotide sequence ID" value="NC_007606.1"/>
</dbReference>
<dbReference type="RefSeq" id="YP_401893.1">
    <property type="nucleotide sequence ID" value="NC_007606.1"/>
</dbReference>
<dbReference type="SMR" id="Q32JV3"/>
<dbReference type="STRING" id="300267.SDY_0171"/>
<dbReference type="EnsemblBacteria" id="ABB60404">
    <property type="protein sequence ID" value="ABB60404"/>
    <property type="gene ID" value="SDY_0171"/>
</dbReference>
<dbReference type="KEGG" id="sdy:SDY_0171"/>
<dbReference type="PATRIC" id="fig|300267.13.peg.197"/>
<dbReference type="HOGENOM" id="CLU_015263_7_0_6"/>
<dbReference type="Proteomes" id="UP000002716">
    <property type="component" value="Chromosome"/>
</dbReference>
<dbReference type="GO" id="GO:0005886">
    <property type="term" value="C:plasma membrane"/>
    <property type="evidence" value="ECO:0007669"/>
    <property type="project" value="UniProtKB-SubCell"/>
</dbReference>
<dbReference type="GO" id="GO:0015297">
    <property type="term" value="F:antiporter activity"/>
    <property type="evidence" value="ECO:0007669"/>
    <property type="project" value="UniProtKB-UniRule"/>
</dbReference>
<dbReference type="GO" id="GO:0005247">
    <property type="term" value="F:voltage-gated chloride channel activity"/>
    <property type="evidence" value="ECO:0007669"/>
    <property type="project" value="TreeGrafter"/>
</dbReference>
<dbReference type="CDD" id="cd01031">
    <property type="entry name" value="EriC"/>
    <property type="match status" value="1"/>
</dbReference>
<dbReference type="FunFam" id="1.10.3080.10:FF:000005">
    <property type="entry name" value="H(+)/Cl(-) exchange transporter ClcA"/>
    <property type="match status" value="1"/>
</dbReference>
<dbReference type="Gene3D" id="1.10.3080.10">
    <property type="entry name" value="Clc chloride channel"/>
    <property type="match status" value="1"/>
</dbReference>
<dbReference type="HAMAP" id="MF_01128">
    <property type="entry name" value="CLC_ClcA"/>
    <property type="match status" value="1"/>
</dbReference>
<dbReference type="InterPro" id="IPR023861">
    <property type="entry name" value="Cl-channel_ClcA"/>
</dbReference>
<dbReference type="InterPro" id="IPR014743">
    <property type="entry name" value="Cl-channel_core"/>
</dbReference>
<dbReference type="InterPro" id="IPR001807">
    <property type="entry name" value="ClC"/>
</dbReference>
<dbReference type="NCBIfam" id="NF003640">
    <property type="entry name" value="PRK05277.1"/>
    <property type="match status" value="1"/>
</dbReference>
<dbReference type="PANTHER" id="PTHR45711">
    <property type="entry name" value="CHLORIDE CHANNEL PROTEIN"/>
    <property type="match status" value="1"/>
</dbReference>
<dbReference type="PANTHER" id="PTHR45711:SF6">
    <property type="entry name" value="CHLORIDE CHANNEL PROTEIN"/>
    <property type="match status" value="1"/>
</dbReference>
<dbReference type="Pfam" id="PF00654">
    <property type="entry name" value="Voltage_CLC"/>
    <property type="match status" value="1"/>
</dbReference>
<dbReference type="PRINTS" id="PR00762">
    <property type="entry name" value="CLCHANNEL"/>
</dbReference>
<dbReference type="SUPFAM" id="SSF81340">
    <property type="entry name" value="Clc chloride channel"/>
    <property type="match status" value="1"/>
</dbReference>
<comment type="function">
    <text evidence="1">Proton-coupled chloride transporter. Functions as antiport system and exchanges two chloride ions for 1 proton. Probably acts as an electrical shunt for an outwardly-directed proton pump that is linked to amino acid decarboxylation, as part of the extreme acid resistance (XAR) response.</text>
</comment>
<comment type="catalytic activity">
    <reaction evidence="1">
        <text>2 chloride(in) + H(+)(out) = 2 chloride(out) + H(+)(in)</text>
        <dbReference type="Rhea" id="RHEA:29567"/>
        <dbReference type="ChEBI" id="CHEBI:15378"/>
        <dbReference type="ChEBI" id="CHEBI:17996"/>
    </reaction>
</comment>
<comment type="subunit">
    <text evidence="1">Homodimer.</text>
</comment>
<comment type="subcellular location">
    <subcellularLocation>
        <location evidence="1">Cell inner membrane</location>
        <topology evidence="1">Multi-pass membrane protein</topology>
    </subcellularLocation>
</comment>
<comment type="similarity">
    <text evidence="1">Belongs to the chloride channel (TC 2.A.49) family. ClcA subfamily.</text>
</comment>
<organism>
    <name type="scientific">Shigella dysenteriae serotype 1 (strain Sd197)</name>
    <dbReference type="NCBI Taxonomy" id="300267"/>
    <lineage>
        <taxon>Bacteria</taxon>
        <taxon>Pseudomonadati</taxon>
        <taxon>Pseudomonadota</taxon>
        <taxon>Gammaproteobacteria</taxon>
        <taxon>Enterobacterales</taxon>
        <taxon>Enterobacteriaceae</taxon>
        <taxon>Shigella</taxon>
    </lineage>
</organism>
<sequence length="473" mass="50335">MKTDTPSLETPQAARLRRRQLIRQLLERDKTPLAILFMAAVVGTLVGLAAVAFDKGVAWLQNQRMGALVHTADNYPLLLTVAFLCSAVLAMFGYFLVRKYAPEAGGSGIPEIEGALEDQRPVRWWRVLPVKFFGGLGTLGGGMVLGREGPTVQIGGNIGRMVLDVFRLKGDEARHTLLATGAAAGLAAAFNAPLAGILFIIEEMRPQFRYTLISIKAVFIGVIMSTIMYRIFNHEVALIDVGKLSDAPLNTLWLYLILGIIFGIFGPIFNKWVLGMQDLLHRVHGGNITKWVLMGGAIGGLCGLLGFVAPATSGGGFNLIPIATAGNFSMGMLVFIFVARVITTLLCFSSGAPGGIFAPMLALGTVLGTAFGMVAVELFPQYHLEAGTFAIAGMGALLAASIRAPLTGIILVLEMTDNYQLILPMIITGLGATLLAQFTGGKPLYSAILARTLAKQEAEQLARSKAASASENT</sequence>
<name>CLCA_SHIDS</name>
<feature type="chain" id="PRO_0000301543" description="H(+)/Cl(-) exchange transporter ClcA">
    <location>
        <begin position="1"/>
        <end position="473"/>
    </location>
</feature>
<feature type="topological domain" description="Cytoplasmic" evidence="1">
    <location>
        <begin position="1"/>
        <end position="32"/>
    </location>
</feature>
<feature type="transmembrane region" description="Helical" evidence="1">
    <location>
        <begin position="33"/>
        <end position="69"/>
    </location>
</feature>
<feature type="topological domain" description="Periplasmic" evidence="1">
    <location>
        <begin position="70"/>
        <end position="76"/>
    </location>
</feature>
<feature type="transmembrane region" description="Helical" evidence="1">
    <location>
        <begin position="77"/>
        <end position="100"/>
    </location>
</feature>
<feature type="intramembrane region" description="Helical" evidence="1">
    <location>
        <begin position="109"/>
        <end position="116"/>
    </location>
</feature>
<feature type="topological domain" description="Cytoplasmic" evidence="1">
    <location>
        <begin position="117"/>
        <end position="123"/>
    </location>
</feature>
<feature type="transmembrane region" description="Helical" evidence="1">
    <location>
        <begin position="124"/>
        <end position="141"/>
    </location>
</feature>
<feature type="transmembrane region" description="Helical" evidence="1">
    <location>
        <begin position="148"/>
        <end position="166"/>
    </location>
</feature>
<feature type="topological domain" description="Cytoplasmic" evidence="1">
    <location>
        <begin position="167"/>
        <end position="176"/>
    </location>
</feature>
<feature type="intramembrane region" description="Helical" evidence="1">
    <location>
        <begin position="177"/>
        <end position="189"/>
    </location>
</feature>
<feature type="intramembrane region" description="Helical" evidence="1">
    <location>
        <begin position="193"/>
        <end position="201"/>
    </location>
</feature>
<feature type="topological domain" description="Cytoplasmic" evidence="1">
    <location>
        <begin position="202"/>
        <end position="214"/>
    </location>
</feature>
<feature type="transmembrane region" description="Helical" evidence="1">
    <location>
        <begin position="215"/>
        <end position="232"/>
    </location>
</feature>
<feature type="topological domain" description="Periplasmic" evidence="1">
    <location>
        <begin position="233"/>
        <end position="252"/>
    </location>
</feature>
<feature type="transmembrane region" description="Helical" evidence="1">
    <location>
        <begin position="253"/>
        <end position="281"/>
    </location>
</feature>
<feature type="topological domain" description="Cytoplasmic" evidence="1">
    <location>
        <begin position="282"/>
        <end position="287"/>
    </location>
</feature>
<feature type="transmembrane region" description="Helical" evidence="1">
    <location>
        <begin position="288"/>
        <end position="309"/>
    </location>
</feature>
<feature type="topological domain" description="Periplasmic" evidence="1">
    <location>
        <begin position="310"/>
        <end position="329"/>
    </location>
</feature>
<feature type="transmembrane region" description="Helical" evidence="1">
    <location>
        <begin position="330"/>
        <end position="349"/>
    </location>
</feature>
<feature type="transmembrane region" description="Helical" evidence="1">
    <location>
        <begin position="355"/>
        <end position="376"/>
    </location>
</feature>
<feature type="topological domain" description="Periplasmic" evidence="1">
    <location>
        <begin position="377"/>
        <end position="386"/>
    </location>
</feature>
<feature type="intramembrane region" description="Helical" evidence="1">
    <location>
        <begin position="387"/>
        <end position="401"/>
    </location>
</feature>
<feature type="intramembrane region" description="Note=Loop between two helices" evidence="1">
    <location>
        <begin position="402"/>
        <end position="404"/>
    </location>
</feature>
<feature type="intramembrane region" description="Helical" evidence="1">
    <location>
        <begin position="405"/>
        <end position="416"/>
    </location>
</feature>
<feature type="intramembrane region" description="Note=Loop between two helices" evidence="1">
    <location>
        <begin position="417"/>
        <end position="421"/>
    </location>
</feature>
<feature type="transmembrane region" description="Helical" evidence="1">
    <location>
        <begin position="422"/>
        <end position="438"/>
    </location>
</feature>
<feature type="topological domain" description="Cytoplasmic" evidence="1">
    <location>
        <begin position="439"/>
        <end position="473"/>
    </location>
</feature>
<feature type="short sequence motif" description="Selectivity filter part_1" evidence="1">
    <location>
        <begin position="106"/>
        <end position="110"/>
    </location>
</feature>
<feature type="short sequence motif" description="Selectivity filter part_2" evidence="1">
    <location>
        <begin position="146"/>
        <end position="150"/>
    </location>
</feature>
<feature type="short sequence motif" description="Selectivity filter part_3" evidence="1">
    <location>
        <begin position="355"/>
        <end position="359"/>
    </location>
</feature>
<feature type="binding site" evidence="1">
    <location>
        <position position="107"/>
    </location>
    <ligand>
        <name>chloride</name>
        <dbReference type="ChEBI" id="CHEBI:17996"/>
    </ligand>
</feature>
<feature type="binding site" evidence="1">
    <location>
        <position position="356"/>
    </location>
    <ligand>
        <name>chloride</name>
        <dbReference type="ChEBI" id="CHEBI:17996"/>
    </ligand>
</feature>
<feature type="binding site" evidence="1">
    <location>
        <position position="357"/>
    </location>
    <ligand>
        <name>chloride</name>
        <dbReference type="ChEBI" id="CHEBI:17996"/>
    </ligand>
</feature>
<feature type="binding site" evidence="1">
    <location>
        <position position="445"/>
    </location>
    <ligand>
        <name>chloride</name>
        <dbReference type="ChEBI" id="CHEBI:17996"/>
    </ligand>
</feature>
<feature type="site" description="Mediates proton transfer from the outer aqueous phase to the interior of the protein; involved in linking H(+) and Cl(-) transport" evidence="1">
    <location>
        <position position="148"/>
    </location>
</feature>
<feature type="site" description="Mediates proton transfer from the protein to the inner aqueous phase" evidence="1">
    <location>
        <position position="203"/>
    </location>
</feature>
<evidence type="ECO:0000255" key="1">
    <source>
        <dbReference type="HAMAP-Rule" id="MF_01128"/>
    </source>
</evidence>
<keyword id="KW-0050">Antiport</keyword>
<keyword id="KW-0997">Cell inner membrane</keyword>
<keyword id="KW-1003">Cell membrane</keyword>
<keyword id="KW-0868">Chloride</keyword>
<keyword id="KW-0406">Ion transport</keyword>
<keyword id="KW-0472">Membrane</keyword>
<keyword id="KW-1185">Reference proteome</keyword>
<keyword id="KW-0812">Transmembrane</keyword>
<keyword id="KW-1133">Transmembrane helix</keyword>
<keyword id="KW-0813">Transport</keyword>
<protein>
    <recommendedName>
        <fullName evidence="1">H(+)/Cl(-) exchange transporter ClcA</fullName>
    </recommendedName>
</protein>